<feature type="chain" id="PRO_1000040397" description="6,7-dimethyl-8-ribityllumazine synthase">
    <location>
        <begin position="1"/>
        <end position="154"/>
    </location>
</feature>
<feature type="active site" description="Proton donor" evidence="1">
    <location>
        <position position="89"/>
    </location>
</feature>
<feature type="binding site" evidence="1">
    <location>
        <position position="22"/>
    </location>
    <ligand>
        <name>5-amino-6-(D-ribitylamino)uracil</name>
        <dbReference type="ChEBI" id="CHEBI:15934"/>
    </ligand>
</feature>
<feature type="binding site" evidence="1">
    <location>
        <begin position="56"/>
        <end position="58"/>
    </location>
    <ligand>
        <name>5-amino-6-(D-ribitylamino)uracil</name>
        <dbReference type="ChEBI" id="CHEBI:15934"/>
    </ligand>
</feature>
<feature type="binding site" evidence="1">
    <location>
        <begin position="81"/>
        <end position="83"/>
    </location>
    <ligand>
        <name>5-amino-6-(D-ribitylamino)uracil</name>
        <dbReference type="ChEBI" id="CHEBI:15934"/>
    </ligand>
</feature>
<feature type="binding site" evidence="1">
    <location>
        <begin position="86"/>
        <end position="87"/>
    </location>
    <ligand>
        <name>(2S)-2-hydroxy-3-oxobutyl phosphate</name>
        <dbReference type="ChEBI" id="CHEBI:58830"/>
    </ligand>
</feature>
<feature type="binding site" evidence="1">
    <location>
        <position position="114"/>
    </location>
    <ligand>
        <name>5-amino-6-(D-ribitylamino)uracil</name>
        <dbReference type="ChEBI" id="CHEBI:15934"/>
    </ligand>
</feature>
<feature type="binding site" evidence="1">
    <location>
        <position position="128"/>
    </location>
    <ligand>
        <name>(2S)-2-hydroxy-3-oxobutyl phosphate</name>
        <dbReference type="ChEBI" id="CHEBI:58830"/>
    </ligand>
</feature>
<organism>
    <name type="scientific">Chlamydia felis (strain Fe/C-56)</name>
    <name type="common">Chlamydophila felis</name>
    <dbReference type="NCBI Taxonomy" id="264202"/>
    <lineage>
        <taxon>Bacteria</taxon>
        <taxon>Pseudomonadati</taxon>
        <taxon>Chlamydiota</taxon>
        <taxon>Chlamydiia</taxon>
        <taxon>Chlamydiales</taxon>
        <taxon>Chlamydiaceae</taxon>
        <taxon>Chlamydia/Chlamydophila group</taxon>
        <taxon>Chlamydia</taxon>
    </lineage>
</organism>
<accession>Q255Z6</accession>
<keyword id="KW-0686">Riboflavin biosynthesis</keyword>
<keyword id="KW-0808">Transferase</keyword>
<comment type="function">
    <text evidence="1">Catalyzes the formation of 6,7-dimethyl-8-ribityllumazine by condensation of 5-amino-6-(D-ribitylamino)uracil with 3,4-dihydroxy-2-butanone 4-phosphate. This is the penultimate step in the biosynthesis of riboflavin.</text>
</comment>
<comment type="catalytic activity">
    <reaction evidence="1">
        <text>(2S)-2-hydroxy-3-oxobutyl phosphate + 5-amino-6-(D-ribitylamino)uracil = 6,7-dimethyl-8-(1-D-ribityl)lumazine + phosphate + 2 H2O + H(+)</text>
        <dbReference type="Rhea" id="RHEA:26152"/>
        <dbReference type="ChEBI" id="CHEBI:15377"/>
        <dbReference type="ChEBI" id="CHEBI:15378"/>
        <dbReference type="ChEBI" id="CHEBI:15934"/>
        <dbReference type="ChEBI" id="CHEBI:43474"/>
        <dbReference type="ChEBI" id="CHEBI:58201"/>
        <dbReference type="ChEBI" id="CHEBI:58830"/>
        <dbReference type="EC" id="2.5.1.78"/>
    </reaction>
</comment>
<comment type="pathway">
    <text evidence="1">Cofactor biosynthesis; riboflavin biosynthesis; riboflavin from 2-hydroxy-3-oxobutyl phosphate and 5-amino-6-(D-ribitylamino)uracil: step 1/2.</text>
</comment>
<comment type="similarity">
    <text evidence="1">Belongs to the DMRL synthase family.</text>
</comment>
<sequence>MKILKGTASARGMRVAIVGACFNGPIADALVSGAQQTFLDLGGSEDMLTVVRVPGSFEIPCTLKKLLSSGMEYHAIVACGVLIKGETSHYDLIADQVAARVSELSVEYGLPITFSVITAPSVDSAWQRAGIKGSHLGVSGMETALEMANLFEKL</sequence>
<proteinExistence type="inferred from homology"/>
<protein>
    <recommendedName>
        <fullName evidence="1">6,7-dimethyl-8-ribityllumazine synthase</fullName>
        <shortName evidence="1">DMRL synthase</shortName>
        <shortName evidence="1">LS</shortName>
        <shortName evidence="1">Lumazine synthase</shortName>
        <ecNumber evidence="1">2.5.1.78</ecNumber>
    </recommendedName>
</protein>
<dbReference type="EC" id="2.5.1.78" evidence="1"/>
<dbReference type="EMBL" id="AP006861">
    <property type="protein sequence ID" value="BAE80892.1"/>
    <property type="molecule type" value="Genomic_DNA"/>
</dbReference>
<dbReference type="RefSeq" id="WP_011457677.1">
    <property type="nucleotide sequence ID" value="NC_007899.1"/>
</dbReference>
<dbReference type="SMR" id="Q255Z6"/>
<dbReference type="STRING" id="264202.CF0120"/>
<dbReference type="KEGG" id="cfe:CF0120"/>
<dbReference type="eggNOG" id="COG0054">
    <property type="taxonomic scope" value="Bacteria"/>
</dbReference>
<dbReference type="HOGENOM" id="CLU_089358_1_1_0"/>
<dbReference type="OrthoDB" id="9809709at2"/>
<dbReference type="UniPathway" id="UPA00275">
    <property type="reaction ID" value="UER00404"/>
</dbReference>
<dbReference type="Proteomes" id="UP000001260">
    <property type="component" value="Chromosome"/>
</dbReference>
<dbReference type="GO" id="GO:0005829">
    <property type="term" value="C:cytosol"/>
    <property type="evidence" value="ECO:0007669"/>
    <property type="project" value="TreeGrafter"/>
</dbReference>
<dbReference type="GO" id="GO:0009349">
    <property type="term" value="C:riboflavin synthase complex"/>
    <property type="evidence" value="ECO:0007669"/>
    <property type="project" value="InterPro"/>
</dbReference>
<dbReference type="GO" id="GO:0000906">
    <property type="term" value="F:6,7-dimethyl-8-ribityllumazine synthase activity"/>
    <property type="evidence" value="ECO:0007669"/>
    <property type="project" value="UniProtKB-UniRule"/>
</dbReference>
<dbReference type="GO" id="GO:0009231">
    <property type="term" value="P:riboflavin biosynthetic process"/>
    <property type="evidence" value="ECO:0007669"/>
    <property type="project" value="UniProtKB-UniRule"/>
</dbReference>
<dbReference type="CDD" id="cd09209">
    <property type="entry name" value="Lumazine_synthase-I"/>
    <property type="match status" value="1"/>
</dbReference>
<dbReference type="Gene3D" id="3.40.50.960">
    <property type="entry name" value="Lumazine/riboflavin synthase"/>
    <property type="match status" value="1"/>
</dbReference>
<dbReference type="HAMAP" id="MF_00178">
    <property type="entry name" value="Lumazine_synth"/>
    <property type="match status" value="1"/>
</dbReference>
<dbReference type="InterPro" id="IPR034964">
    <property type="entry name" value="LS"/>
</dbReference>
<dbReference type="InterPro" id="IPR002180">
    <property type="entry name" value="LS/RS"/>
</dbReference>
<dbReference type="InterPro" id="IPR036467">
    <property type="entry name" value="LS/RS_sf"/>
</dbReference>
<dbReference type="NCBIfam" id="TIGR00114">
    <property type="entry name" value="lumazine-synth"/>
    <property type="match status" value="1"/>
</dbReference>
<dbReference type="PANTHER" id="PTHR21058:SF0">
    <property type="entry name" value="6,7-DIMETHYL-8-RIBITYLLUMAZINE SYNTHASE"/>
    <property type="match status" value="1"/>
</dbReference>
<dbReference type="PANTHER" id="PTHR21058">
    <property type="entry name" value="6,7-DIMETHYL-8-RIBITYLLUMAZINE SYNTHASE DMRL SYNTHASE LUMAZINE SYNTHASE"/>
    <property type="match status" value="1"/>
</dbReference>
<dbReference type="Pfam" id="PF00885">
    <property type="entry name" value="DMRL_synthase"/>
    <property type="match status" value="1"/>
</dbReference>
<dbReference type="SUPFAM" id="SSF52121">
    <property type="entry name" value="Lumazine synthase"/>
    <property type="match status" value="1"/>
</dbReference>
<name>RISB_CHLFF</name>
<gene>
    <name evidence="1" type="primary">ribH</name>
    <name type="ordered locus">CF0120</name>
</gene>
<reference key="1">
    <citation type="journal article" date="2006" name="DNA Res.">
        <title>Genome sequence of the cat pathogen, Chlamydophila felis.</title>
        <authorList>
            <person name="Azuma Y."/>
            <person name="Hirakawa H."/>
            <person name="Yamashita A."/>
            <person name="Cai Y."/>
            <person name="Rahman M.A."/>
            <person name="Suzuki H."/>
            <person name="Mitaku S."/>
            <person name="Toh H."/>
            <person name="Goto S."/>
            <person name="Murakami T."/>
            <person name="Sugi K."/>
            <person name="Hayashi H."/>
            <person name="Fukushi H."/>
            <person name="Hattori M."/>
            <person name="Kuhara S."/>
            <person name="Shirai M."/>
        </authorList>
    </citation>
    <scope>NUCLEOTIDE SEQUENCE [LARGE SCALE GENOMIC DNA]</scope>
    <source>
        <strain>Fe/C-56</strain>
    </source>
</reference>
<evidence type="ECO:0000255" key="1">
    <source>
        <dbReference type="HAMAP-Rule" id="MF_00178"/>
    </source>
</evidence>